<reference key="1">
    <citation type="journal article" date="2003" name="J. Invest. Dermatol.">
        <title>K6irs1, K6irs2, K6irs3, and K6irs4 represent the inner-root-sheath-specific type II epithelial keratins of the human hair follicle.</title>
        <authorList>
            <person name="Langbein L."/>
            <person name="Rogers M.A."/>
            <person name="Praetzel S."/>
            <person name="Winter H."/>
            <person name="Schweizer J."/>
        </authorList>
    </citation>
    <scope>NUCLEOTIDE SEQUENCE [MRNA]</scope>
    <scope>TISSUE SPECIFICITY</scope>
    <source>
        <tissue>Scalp</tissue>
    </source>
</reference>
<reference key="2">
    <citation type="submission" date="2005-07" db="EMBL/GenBank/DDBJ databases">
        <authorList>
            <person name="Mural R.J."/>
            <person name="Istrail S."/>
            <person name="Sutton G.G."/>
            <person name="Florea L."/>
            <person name="Halpern A.L."/>
            <person name="Mobarry C.M."/>
            <person name="Lippert R."/>
            <person name="Walenz B."/>
            <person name="Shatkay H."/>
            <person name="Dew I."/>
            <person name="Miller J.R."/>
            <person name="Flanigan M.J."/>
            <person name="Edwards N.J."/>
            <person name="Bolanos R."/>
            <person name="Fasulo D."/>
            <person name="Halldorsson B.V."/>
            <person name="Hannenhalli S."/>
            <person name="Turner R."/>
            <person name="Yooseph S."/>
            <person name="Lu F."/>
            <person name="Nusskern D.R."/>
            <person name="Shue B.C."/>
            <person name="Zheng X.H."/>
            <person name="Zhong F."/>
            <person name="Delcher A.L."/>
            <person name="Huson D.H."/>
            <person name="Kravitz S.A."/>
            <person name="Mouchard L."/>
            <person name="Reinert K."/>
            <person name="Remington K.A."/>
            <person name="Clark A.G."/>
            <person name="Waterman M.S."/>
            <person name="Eichler E.E."/>
            <person name="Adams M.D."/>
            <person name="Hunkapiller M.W."/>
            <person name="Myers E.W."/>
            <person name="Venter J.C."/>
        </authorList>
    </citation>
    <scope>NUCLEOTIDE SEQUENCE [LARGE SCALE GENOMIC DNA]</scope>
</reference>
<reference key="3">
    <citation type="journal article" date="2004" name="Genome Res.">
        <title>The status, quality, and expansion of the NIH full-length cDNA project: the Mammalian Gene Collection (MGC).</title>
        <authorList>
            <consortium name="The MGC Project Team"/>
        </authorList>
    </citation>
    <scope>NUCLEOTIDE SEQUENCE [LARGE SCALE MRNA]</scope>
</reference>
<reference key="4">
    <citation type="journal article" date="2006" name="J. Invest. Dermatol.">
        <title>K25 (K25irs1), K26 (K25irs2), K27 (K25irs3), and K28 (K25irs4) represent the type I inner root sheath keratins of the human hair follicle.</title>
        <authorList>
            <person name="Langbein L."/>
            <person name="Rogers M.A."/>
            <person name="Praetzel-Wunder S."/>
            <person name="Helmke B."/>
            <person name="Schirmacher P."/>
            <person name="Schweizer J."/>
        </authorList>
    </citation>
    <scope>TISSUE SPECIFICITY</scope>
</reference>
<reference key="5">
    <citation type="journal article" date="2006" name="Science">
        <title>The consensus coding sequences of human breast and colorectal cancers.</title>
        <authorList>
            <person name="Sjoeblom T."/>
            <person name="Jones S."/>
            <person name="Wood L.D."/>
            <person name="Parsons D.W."/>
            <person name="Lin J."/>
            <person name="Barber T.D."/>
            <person name="Mandelker D."/>
            <person name="Leary R.J."/>
            <person name="Ptak J."/>
            <person name="Silliman N."/>
            <person name="Szabo S."/>
            <person name="Buckhaults P."/>
            <person name="Farrell C."/>
            <person name="Meeh P."/>
            <person name="Markowitz S.D."/>
            <person name="Willis J."/>
            <person name="Dawson D."/>
            <person name="Willson J.K.V."/>
            <person name="Gazdar A.F."/>
            <person name="Hartigan J."/>
            <person name="Wu L."/>
            <person name="Liu C."/>
            <person name="Parmigiani G."/>
            <person name="Park B.H."/>
            <person name="Bachman K.E."/>
            <person name="Papadopoulos N."/>
            <person name="Vogelstein B."/>
            <person name="Kinzler K.W."/>
            <person name="Velculescu V.E."/>
        </authorList>
    </citation>
    <scope>VARIANTS [LARGE SCALE ANALYSIS] HIS-212 AND MET-248</scope>
</reference>
<keyword id="KW-0025">Alternative splicing</keyword>
<keyword id="KW-0175">Coiled coil</keyword>
<keyword id="KW-0403">Intermediate filament</keyword>
<keyword id="KW-0416">Keratin</keyword>
<keyword id="KW-1267">Proteomics identification</keyword>
<keyword id="KW-1185">Reference proteome</keyword>
<proteinExistence type="evidence at protein level"/>
<gene>
    <name type="primary">KRT73</name>
    <name type="synonym">K6IRS3</name>
    <name type="synonym">KB36</name>
    <name type="synonym">KRT6IRS3</name>
</gene>
<comment type="function">
    <text evidence="6">Has a role in hair formation. Specific component of keratin intermediate filaments in the inner root sheath (IRS) of the hair follicle (Probable).</text>
</comment>
<comment type="subunit">
    <text>Heterotetramer of two type I and two type II keratins.</text>
</comment>
<comment type="interaction">
    <interactant intactId="EBI-2830994">
        <id>Q86Y46</id>
    </interactant>
    <interactant intactId="EBI-739566">
        <id>P19012</id>
        <label>KRT15</label>
    </interactant>
    <organismsDiffer>false</organismsDiffer>
    <experiments>3</experiments>
</comment>
<comment type="interaction">
    <interactant intactId="EBI-12039441">
        <id>Q86Y46-2</id>
    </interactant>
    <interactant intactId="EBI-739566">
        <id>P19012</id>
        <label>KRT15</label>
    </interactant>
    <organismsDiffer>false</organismsDiffer>
    <experiments>3</experiments>
</comment>
<comment type="interaction">
    <interactant intactId="EBI-12039441">
        <id>Q86Y46-2</id>
    </interactant>
    <interactant intactId="EBI-356410">
        <id>P08779</id>
        <label>KRT16</label>
    </interactant>
    <organismsDiffer>false</organismsDiffer>
    <experiments>3</experiments>
</comment>
<comment type="interaction">
    <interactant intactId="EBI-12039441">
        <id>Q86Y46-2</id>
    </interactant>
    <interactant intactId="EBI-948001">
        <id>Q15323</id>
        <label>KRT31</label>
    </interactant>
    <organismsDiffer>false</organismsDiffer>
    <experiments>3</experiments>
</comment>
<comment type="interaction">
    <interactant intactId="EBI-12039441">
        <id>Q86Y46-2</id>
    </interactant>
    <interactant intactId="EBI-11958506">
        <id>O76013-2</id>
        <label>KRT36</label>
    </interactant>
    <organismsDiffer>false</organismsDiffer>
    <experiments>3</experiments>
</comment>
<comment type="alternative products">
    <event type="alternative splicing"/>
    <isoform>
        <id>Q86Y46-1</id>
        <name>1</name>
        <sequence type="displayed"/>
    </isoform>
    <isoform>
        <id>Q86Y46-2</id>
        <name>2</name>
        <sequence type="described" ref="VSP_030417 VSP_030418"/>
    </isoform>
</comment>
<comment type="tissue specificity">
    <text evidence="3 4">Highly expressed in hair follicles from scalp. In hair, it is specifically present in the inner root sheath (IRS) of the hair follicle. Present in the IRS cuticle, but not in Henle or Huxley layers of the IRS. In the IRS cuticle, it is expressed between the lowermost bulb region of the cuticle and the region where Henle cells undergo abrupt terminal differentiation. Detected up to the uppermost cortex region where cuticle cells terminally differentiate (at protein level).</text>
</comment>
<comment type="miscellaneous">
    <text>There are two types of cytoskeletal and microfibrillar keratin, I (acidic) and II (neutral to basic) (40-55 and 56-70 kDa, respectively).</text>
</comment>
<comment type="similarity">
    <text evidence="1">Belongs to the intermediate filament family.</text>
</comment>
<dbReference type="EMBL" id="AJ508776">
    <property type="protein sequence ID" value="CAD48513.1"/>
    <property type="molecule type" value="mRNA"/>
</dbReference>
<dbReference type="EMBL" id="CH471054">
    <property type="protein sequence ID" value="EAW96640.1"/>
    <property type="molecule type" value="Genomic_DNA"/>
</dbReference>
<dbReference type="EMBL" id="BC109212">
    <property type="protein sequence ID" value="AAI09213.1"/>
    <property type="molecule type" value="mRNA"/>
</dbReference>
<dbReference type="EMBL" id="BC109213">
    <property type="protein sequence ID" value="AAI09214.1"/>
    <property type="molecule type" value="mRNA"/>
</dbReference>
<dbReference type="CCDS" id="CCDS8834.1">
    <molecule id="Q86Y46-1"/>
</dbReference>
<dbReference type="RefSeq" id="NP_778238.1">
    <molecule id="Q86Y46-1"/>
    <property type="nucleotide sequence ID" value="NM_175068.3"/>
</dbReference>
<dbReference type="RefSeq" id="XP_047284717.1">
    <molecule id="Q86Y46-1"/>
    <property type="nucleotide sequence ID" value="XM_047428761.1"/>
</dbReference>
<dbReference type="RefSeq" id="XP_054227888.1">
    <molecule id="Q86Y46-1"/>
    <property type="nucleotide sequence ID" value="XM_054371913.1"/>
</dbReference>
<dbReference type="SMR" id="Q86Y46"/>
<dbReference type="BioGRID" id="130489">
    <property type="interactions" value="60"/>
</dbReference>
<dbReference type="FunCoup" id="Q86Y46">
    <property type="interactions" value="290"/>
</dbReference>
<dbReference type="IntAct" id="Q86Y46">
    <property type="interactions" value="31"/>
</dbReference>
<dbReference type="MINT" id="Q86Y46"/>
<dbReference type="STRING" id="9606.ENSP00000307014"/>
<dbReference type="iPTMnet" id="Q86Y46"/>
<dbReference type="PhosphoSitePlus" id="Q86Y46"/>
<dbReference type="SwissPalm" id="Q86Y46"/>
<dbReference type="BioMuta" id="KRT73"/>
<dbReference type="DMDM" id="74750553"/>
<dbReference type="jPOST" id="Q86Y46"/>
<dbReference type="MassIVE" id="Q86Y46"/>
<dbReference type="PaxDb" id="9606-ENSP00000307014"/>
<dbReference type="PeptideAtlas" id="Q86Y46"/>
<dbReference type="PRIDE" id="Q86Y46"/>
<dbReference type="ProteomicsDB" id="70373">
    <molecule id="Q86Y46-1"/>
</dbReference>
<dbReference type="ProteomicsDB" id="70374">
    <molecule id="Q86Y46-2"/>
</dbReference>
<dbReference type="Antibodypedia" id="51267">
    <property type="antibodies" value="104 antibodies from 17 providers"/>
</dbReference>
<dbReference type="DNASU" id="319101"/>
<dbReference type="Ensembl" id="ENST00000305748.7">
    <molecule id="Q86Y46-1"/>
    <property type="protein sequence ID" value="ENSP00000307014.3"/>
    <property type="gene ID" value="ENSG00000186049.8"/>
</dbReference>
<dbReference type="GeneID" id="319101"/>
<dbReference type="KEGG" id="hsa:319101"/>
<dbReference type="MANE-Select" id="ENST00000305748.7">
    <property type="protein sequence ID" value="ENSP00000307014.3"/>
    <property type="RefSeq nucleotide sequence ID" value="NM_175068.3"/>
    <property type="RefSeq protein sequence ID" value="NP_778238.1"/>
</dbReference>
<dbReference type="UCSC" id="uc001sas.3">
    <molecule id="Q86Y46-1"/>
    <property type="organism name" value="human"/>
</dbReference>
<dbReference type="AGR" id="HGNC:28928"/>
<dbReference type="CTD" id="319101"/>
<dbReference type="GeneCards" id="KRT73"/>
<dbReference type="HGNC" id="HGNC:28928">
    <property type="gene designation" value="KRT73"/>
</dbReference>
<dbReference type="HPA" id="ENSG00000186049">
    <property type="expression patterns" value="Tissue enriched (skin)"/>
</dbReference>
<dbReference type="MIM" id="608247">
    <property type="type" value="gene"/>
</dbReference>
<dbReference type="neXtProt" id="NX_Q86Y46"/>
<dbReference type="OpenTargets" id="ENSG00000186049"/>
<dbReference type="PharmGKB" id="PA147031702"/>
<dbReference type="VEuPathDB" id="HostDB:ENSG00000186049"/>
<dbReference type="eggNOG" id="ENOG502SK67">
    <property type="taxonomic scope" value="Eukaryota"/>
</dbReference>
<dbReference type="GeneTree" id="ENSGT00940000161853"/>
<dbReference type="HOGENOM" id="CLU_012560_6_1_1"/>
<dbReference type="InParanoid" id="Q86Y46"/>
<dbReference type="OMA" id="ARMMCEY"/>
<dbReference type="OrthoDB" id="2441647at2759"/>
<dbReference type="PAN-GO" id="Q86Y46">
    <property type="GO annotations" value="4 GO annotations based on evolutionary models"/>
</dbReference>
<dbReference type="PhylomeDB" id="Q86Y46"/>
<dbReference type="TreeFam" id="TF317854"/>
<dbReference type="PathwayCommons" id="Q86Y46"/>
<dbReference type="Reactome" id="R-HSA-6805567">
    <property type="pathway name" value="Keratinization"/>
</dbReference>
<dbReference type="Reactome" id="R-HSA-6809371">
    <property type="pathway name" value="Formation of the cornified envelope"/>
</dbReference>
<dbReference type="SignaLink" id="Q86Y46"/>
<dbReference type="BioGRID-ORCS" id="319101">
    <property type="hits" value="13 hits in 1137 CRISPR screens"/>
</dbReference>
<dbReference type="GenomeRNAi" id="319101"/>
<dbReference type="Pharos" id="Q86Y46">
    <property type="development level" value="Tdark"/>
</dbReference>
<dbReference type="PRO" id="PR:Q86Y46"/>
<dbReference type="Proteomes" id="UP000005640">
    <property type="component" value="Chromosome 12"/>
</dbReference>
<dbReference type="RNAct" id="Q86Y46">
    <property type="molecule type" value="protein"/>
</dbReference>
<dbReference type="Bgee" id="ENSG00000186049">
    <property type="expression patterns" value="Expressed in skin of leg and 61 other cell types or tissues"/>
</dbReference>
<dbReference type="ExpressionAtlas" id="Q86Y46">
    <property type="expression patterns" value="baseline and differential"/>
</dbReference>
<dbReference type="GO" id="GO:0005829">
    <property type="term" value="C:cytosol"/>
    <property type="evidence" value="ECO:0000304"/>
    <property type="project" value="Reactome"/>
</dbReference>
<dbReference type="GO" id="GO:0070062">
    <property type="term" value="C:extracellular exosome"/>
    <property type="evidence" value="ECO:0007005"/>
    <property type="project" value="UniProtKB"/>
</dbReference>
<dbReference type="GO" id="GO:0045095">
    <property type="term" value="C:keratin filament"/>
    <property type="evidence" value="ECO:0000318"/>
    <property type="project" value="GO_Central"/>
</dbReference>
<dbReference type="GO" id="GO:0005634">
    <property type="term" value="C:nucleus"/>
    <property type="evidence" value="ECO:0007005"/>
    <property type="project" value="UniProtKB"/>
</dbReference>
<dbReference type="GO" id="GO:0030280">
    <property type="term" value="F:structural constituent of skin epidermis"/>
    <property type="evidence" value="ECO:0000318"/>
    <property type="project" value="GO_Central"/>
</dbReference>
<dbReference type="GO" id="GO:0045109">
    <property type="term" value="P:intermediate filament organization"/>
    <property type="evidence" value="ECO:0000318"/>
    <property type="project" value="GO_Central"/>
</dbReference>
<dbReference type="GO" id="GO:0031424">
    <property type="term" value="P:keratinization"/>
    <property type="evidence" value="ECO:0000318"/>
    <property type="project" value="GO_Central"/>
</dbReference>
<dbReference type="FunFam" id="1.20.5.1160:FF:000001">
    <property type="entry name" value="Keratin type II"/>
    <property type="match status" value="1"/>
</dbReference>
<dbReference type="FunFam" id="1.20.5.170:FF:000004">
    <property type="entry name" value="Keratin, type II cytoskeletal 5"/>
    <property type="match status" value="1"/>
</dbReference>
<dbReference type="FunFam" id="1.20.5.500:FF:000001">
    <property type="entry name" value="Type II keratin 23"/>
    <property type="match status" value="1"/>
</dbReference>
<dbReference type="Gene3D" id="1.20.5.170">
    <property type="match status" value="1"/>
</dbReference>
<dbReference type="Gene3D" id="1.20.5.500">
    <property type="entry name" value="Single helix bin"/>
    <property type="match status" value="1"/>
</dbReference>
<dbReference type="Gene3D" id="1.20.5.1160">
    <property type="entry name" value="Vasodilator-stimulated phosphoprotein"/>
    <property type="match status" value="1"/>
</dbReference>
<dbReference type="InterPro" id="IPR018039">
    <property type="entry name" value="IF_conserved"/>
</dbReference>
<dbReference type="InterPro" id="IPR039008">
    <property type="entry name" value="IF_rod_dom"/>
</dbReference>
<dbReference type="InterPro" id="IPR032444">
    <property type="entry name" value="Keratin_2_head"/>
</dbReference>
<dbReference type="InterPro" id="IPR003054">
    <property type="entry name" value="Keratin_II"/>
</dbReference>
<dbReference type="PANTHER" id="PTHR45616">
    <property type="entry name" value="GATA-TYPE DOMAIN-CONTAINING PROTEIN"/>
    <property type="match status" value="1"/>
</dbReference>
<dbReference type="PANTHER" id="PTHR45616:SF31">
    <property type="entry name" value="KERATIN, TYPE II CYTOSKELETAL 73"/>
    <property type="match status" value="1"/>
</dbReference>
<dbReference type="Pfam" id="PF00038">
    <property type="entry name" value="Filament"/>
    <property type="match status" value="1"/>
</dbReference>
<dbReference type="Pfam" id="PF16208">
    <property type="entry name" value="Keratin_2_head"/>
    <property type="match status" value="1"/>
</dbReference>
<dbReference type="PRINTS" id="PR01276">
    <property type="entry name" value="TYPE2KERATIN"/>
</dbReference>
<dbReference type="SMART" id="SM01391">
    <property type="entry name" value="Filament"/>
    <property type="match status" value="1"/>
</dbReference>
<dbReference type="SUPFAM" id="SSF64593">
    <property type="entry name" value="Intermediate filament protein, coiled coil region"/>
    <property type="match status" value="3"/>
</dbReference>
<dbReference type="PROSITE" id="PS00226">
    <property type="entry name" value="IF_ROD_1"/>
    <property type="match status" value="1"/>
</dbReference>
<dbReference type="PROSITE" id="PS51842">
    <property type="entry name" value="IF_ROD_2"/>
    <property type="match status" value="1"/>
</dbReference>
<sequence>MSRQFTYKSGAAAKGGFSGCSAVLSGGSSSSYRAGGKGLSGGFSSRSLYSLGGARSISFNVASGSGWAGGYGFGRGRASGFAGSMFGSVALGSVCPSLCPPGGIHQVTINKSLLAPLNVELDPEIQKVRAQEREQIKVLNNKFASFIDKVRFLEQQNQVLETKWELLQQLDLNNCKNNLEPILEGYISNLRKQLETLSGDRVRLDSELRSVREVVEDYKKRYEEEINKRTTAENEFVVLKKDVDAAYTSKVELQAKVDALDGEIKFFKCLYEGETAQIQSHISDTSIILSMDNNRNLDLDSIIAEVRAQYEEIARKSKAEAEALYQTKFQELQLAAGRHGDDLKHTKNEISELTRLIQRLRSEIESVKKQCANLETAIADAEQRGDCALKDARAKLDELEGALQQAKEELARMLREYQELLSVKLSLDIEIATYRKLLEGEECRMSGEYTNSVSISVINSSMAGMAGTGAGFGFSNAGTYGYWPSSVSGGYSMLPGGCVTGSGNCSPRGEARTRLGSASEFRDSQGKTLALSSPTKKTMR</sequence>
<name>K2C73_HUMAN</name>
<feature type="chain" id="PRO_0000314881" description="Keratin, type II cytoskeletal 73">
    <location>
        <begin position="1"/>
        <end position="540"/>
    </location>
</feature>
<feature type="domain" description="IF rod" evidence="1">
    <location>
        <begin position="132"/>
        <end position="445"/>
    </location>
</feature>
<feature type="region of interest" description="Head">
    <location>
        <begin position="1"/>
        <end position="131"/>
    </location>
</feature>
<feature type="region of interest" description="Coil 1A">
    <location>
        <begin position="132"/>
        <end position="167"/>
    </location>
</feature>
<feature type="region of interest" description="Linker 1">
    <location>
        <begin position="168"/>
        <end position="186"/>
    </location>
</feature>
<feature type="region of interest" description="Coil 1B">
    <location>
        <begin position="187"/>
        <end position="278"/>
    </location>
</feature>
<feature type="region of interest" description="Linker 12">
    <location>
        <begin position="279"/>
        <end position="302"/>
    </location>
</feature>
<feature type="region of interest" description="Coil 2">
    <location>
        <begin position="303"/>
        <end position="441"/>
    </location>
</feature>
<feature type="region of interest" description="Tail">
    <location>
        <begin position="442"/>
        <end position="540"/>
    </location>
</feature>
<feature type="region of interest" description="Disordered" evidence="2">
    <location>
        <begin position="502"/>
        <end position="540"/>
    </location>
</feature>
<feature type="compositionally biased region" description="Polar residues" evidence="2">
    <location>
        <begin position="526"/>
        <end position="540"/>
    </location>
</feature>
<feature type="site" description="Stutter">
    <location>
        <position position="383"/>
    </location>
</feature>
<feature type="splice variant" id="VSP_030417" description="In isoform 2." evidence="6">
    <original>CANLETAIADA</original>
    <variation>VKGTGAFLTHS</variation>
    <location>
        <begin position="371"/>
        <end position="381"/>
    </location>
</feature>
<feature type="splice variant" id="VSP_030418" description="In isoform 2." evidence="6">
    <location>
        <begin position="382"/>
        <end position="540"/>
    </location>
</feature>
<feature type="sequence variant" id="VAR_038091" description="In dbSNP:rs35417182.">
    <original>V</original>
    <variation>M</variation>
    <location>
        <position position="61"/>
    </location>
</feature>
<feature type="sequence variant" id="VAR_038092" description="In dbSNP:rs659436.">
    <original>P</original>
    <variation>L</variation>
    <location>
        <position position="96"/>
    </location>
</feature>
<feature type="sequence variant" id="VAR_038093" description="In a colorectal cancer sample; somatic mutation; dbSNP:rs1210935768." evidence="5">
    <original>R</original>
    <variation>H</variation>
    <location>
        <position position="212"/>
    </location>
</feature>
<feature type="sequence variant" id="VAR_038094" description="In a colorectal cancer sample; somatic mutation; dbSNP:rs142246988." evidence="5">
    <original>T</original>
    <variation>M</variation>
    <location>
        <position position="248"/>
    </location>
</feature>
<feature type="sequence variant" id="VAR_038095" description="In dbSNP:rs607426.">
    <original>E</original>
    <variation>G</variation>
    <location>
        <position position="365"/>
    </location>
</feature>
<feature type="sequence conflict" description="In Ref. 3; AAI09214/AAI09213." evidence="6" ref="3">
    <original>A</original>
    <variation>P</variation>
    <location>
        <position position="11"/>
    </location>
</feature>
<organism>
    <name type="scientific">Homo sapiens</name>
    <name type="common">Human</name>
    <dbReference type="NCBI Taxonomy" id="9606"/>
    <lineage>
        <taxon>Eukaryota</taxon>
        <taxon>Metazoa</taxon>
        <taxon>Chordata</taxon>
        <taxon>Craniata</taxon>
        <taxon>Vertebrata</taxon>
        <taxon>Euteleostomi</taxon>
        <taxon>Mammalia</taxon>
        <taxon>Eutheria</taxon>
        <taxon>Euarchontoglires</taxon>
        <taxon>Primates</taxon>
        <taxon>Haplorrhini</taxon>
        <taxon>Catarrhini</taxon>
        <taxon>Hominidae</taxon>
        <taxon>Homo</taxon>
    </lineage>
</organism>
<protein>
    <recommendedName>
        <fullName>Keratin, type II cytoskeletal 73</fullName>
    </recommendedName>
    <alternativeName>
        <fullName>Cytokeratin-73</fullName>
        <shortName>CK-73</shortName>
    </alternativeName>
    <alternativeName>
        <fullName>Keratin-73</fullName>
        <shortName>K73</shortName>
    </alternativeName>
    <alternativeName>
        <fullName>Type II inner root sheath-specific keratin-K6irs3</fullName>
    </alternativeName>
    <alternativeName>
        <fullName>Type-II keratin Kb36</fullName>
    </alternativeName>
</protein>
<accession>Q86Y46</accession>
<accession>Q32MB2</accession>
<evidence type="ECO:0000255" key="1">
    <source>
        <dbReference type="PROSITE-ProRule" id="PRU01188"/>
    </source>
</evidence>
<evidence type="ECO:0000256" key="2">
    <source>
        <dbReference type="SAM" id="MobiDB-lite"/>
    </source>
</evidence>
<evidence type="ECO:0000269" key="3">
    <source>
    </source>
</evidence>
<evidence type="ECO:0000269" key="4">
    <source>
    </source>
</evidence>
<evidence type="ECO:0000269" key="5">
    <source>
    </source>
</evidence>
<evidence type="ECO:0000305" key="6"/>